<feature type="chain" id="PRO_0000046197" description="Sarcoplasmic/endoplasmic reticulum calcium ATPase 2">
    <location>
        <begin position="1"/>
        <end position="1044"/>
    </location>
</feature>
<feature type="topological domain" description="Cytoplasmic" evidence="23">
    <location>
        <begin position="1"/>
        <end position="48"/>
    </location>
</feature>
<feature type="transmembrane region" description="Helical; Name=1" evidence="3">
    <location>
        <begin position="49"/>
        <end position="69"/>
    </location>
</feature>
<feature type="topological domain" description="Lumenal" evidence="23">
    <location>
        <begin position="70"/>
        <end position="89"/>
    </location>
</feature>
<feature type="transmembrane region" description="Helical; Name=2" evidence="3">
    <location>
        <begin position="90"/>
        <end position="110"/>
    </location>
</feature>
<feature type="topological domain" description="Cytoplasmic" evidence="23">
    <location>
        <begin position="111"/>
        <end position="253"/>
    </location>
</feature>
<feature type="transmembrane region" description="Helical; Name=3" evidence="3">
    <location>
        <begin position="254"/>
        <end position="273"/>
    </location>
</feature>
<feature type="topological domain" description="Lumenal" evidence="23">
    <location>
        <begin position="274"/>
        <end position="295"/>
    </location>
</feature>
<feature type="transmembrane region" description="Helical; Name=4" evidence="3">
    <location>
        <begin position="296"/>
        <end position="313"/>
    </location>
</feature>
<feature type="topological domain" description="Cytoplasmic" evidence="23">
    <location>
        <begin position="314"/>
        <end position="756"/>
    </location>
</feature>
<feature type="transmembrane region" description="Helical; Name=5" evidence="3">
    <location>
        <begin position="757"/>
        <end position="776"/>
    </location>
</feature>
<feature type="topological domain" description="Lumenal" evidence="23">
    <location>
        <begin position="777"/>
        <end position="786"/>
    </location>
</feature>
<feature type="transmembrane region" description="Helical; Name=6" evidence="3">
    <location>
        <begin position="787"/>
        <end position="807"/>
    </location>
</feature>
<feature type="topological domain" description="Cytoplasmic" evidence="23">
    <location>
        <begin position="808"/>
        <end position="827"/>
    </location>
</feature>
<feature type="transmembrane region" description="Helical; Name=7" evidence="3">
    <location>
        <begin position="828"/>
        <end position="850"/>
    </location>
</feature>
<feature type="topological domain" description="Lumenal" evidence="23">
    <location>
        <begin position="851"/>
        <end position="896"/>
    </location>
</feature>
<feature type="transmembrane region" description="Helical; Name=8" evidence="3">
    <location>
        <begin position="897"/>
        <end position="916"/>
    </location>
</feature>
<feature type="topological domain" description="Cytoplasmic" evidence="23">
    <location>
        <begin position="917"/>
        <end position="929"/>
    </location>
</feature>
<feature type="transmembrane region" description="Helical; Name=9" evidence="3">
    <location>
        <begin position="930"/>
        <end position="948"/>
    </location>
</feature>
<feature type="topological domain" description="Lumenal" evidence="23">
    <location>
        <begin position="949"/>
        <end position="963"/>
    </location>
</feature>
<feature type="transmembrane region" description="Helical; Name=10" evidence="3">
    <location>
        <begin position="964"/>
        <end position="984"/>
    </location>
</feature>
<feature type="topological domain" description="Cytoplasmic" evidence="23">
    <location>
        <begin position="985"/>
        <end position="1044"/>
    </location>
</feature>
<feature type="region of interest" description="Interaction with HAX1" evidence="1">
    <location>
        <begin position="575"/>
        <end position="594"/>
    </location>
</feature>
<feature type="region of interest" description="Interaction with PLN" evidence="3">
    <location>
        <begin position="787"/>
        <end position="807"/>
    </location>
</feature>
<feature type="region of interest" description="Interaction with TMEM64 and PDIA3" evidence="14">
    <location>
        <begin position="788"/>
        <end position="1044"/>
    </location>
</feature>
<feature type="region of interest" description="Interaction with PLN" evidence="3">
    <location>
        <begin position="931"/>
        <end position="942"/>
    </location>
</feature>
<feature type="active site" description="4-aspartylphosphate intermediate" evidence="3">
    <location>
        <position position="351"/>
    </location>
</feature>
<feature type="binding site" evidence="5">
    <location>
        <position position="304"/>
    </location>
    <ligand>
        <name>Ca(2+)</name>
        <dbReference type="ChEBI" id="CHEBI:29108"/>
        <label>1</label>
    </ligand>
</feature>
<feature type="binding site" evidence="5">
    <location>
        <position position="305"/>
    </location>
    <ligand>
        <name>Ca(2+)</name>
        <dbReference type="ChEBI" id="CHEBI:29108"/>
        <label>1</label>
    </ligand>
</feature>
<feature type="binding site" evidence="5">
    <location>
        <position position="307"/>
    </location>
    <ligand>
        <name>Ca(2+)</name>
        <dbReference type="ChEBI" id="CHEBI:29108"/>
        <label>1</label>
    </ligand>
</feature>
<feature type="binding site" evidence="5">
    <location>
        <position position="309"/>
    </location>
    <ligand>
        <name>Ca(2+)</name>
        <dbReference type="ChEBI" id="CHEBI:29108"/>
        <label>1</label>
    </ligand>
</feature>
<feature type="binding site" evidence="5">
    <location>
        <position position="351"/>
    </location>
    <ligand>
        <name>Mg(2+)</name>
        <dbReference type="ChEBI" id="CHEBI:18420"/>
    </ligand>
</feature>
<feature type="binding site" evidence="5">
    <location>
        <position position="353"/>
    </location>
    <ligand>
        <name>ATP</name>
        <dbReference type="ChEBI" id="CHEBI:30616"/>
    </ligand>
</feature>
<feature type="binding site" evidence="5">
    <location>
        <position position="353"/>
    </location>
    <ligand>
        <name>Mg(2+)</name>
        <dbReference type="ChEBI" id="CHEBI:18420"/>
    </ligand>
</feature>
<feature type="binding site" evidence="5">
    <location>
        <position position="442"/>
    </location>
    <ligand>
        <name>ATP</name>
        <dbReference type="ChEBI" id="CHEBI:30616"/>
    </ligand>
</feature>
<feature type="binding site" evidence="5">
    <location>
        <position position="489"/>
    </location>
    <ligand>
        <name>ATP</name>
        <dbReference type="ChEBI" id="CHEBI:30616"/>
    </ligand>
</feature>
<feature type="binding site" evidence="5">
    <location>
        <position position="514"/>
    </location>
    <ligand>
        <name>ATP</name>
        <dbReference type="ChEBI" id="CHEBI:30616"/>
    </ligand>
</feature>
<feature type="binding site" evidence="3">
    <location>
        <position position="559"/>
    </location>
    <ligand>
        <name>ATP</name>
        <dbReference type="ChEBI" id="CHEBI:30616"/>
    </ligand>
</feature>
<feature type="binding site" evidence="3">
    <location>
        <position position="624"/>
    </location>
    <ligand>
        <name>ATP</name>
        <dbReference type="ChEBI" id="CHEBI:30616"/>
    </ligand>
</feature>
<feature type="binding site" evidence="3">
    <location>
        <position position="625"/>
    </location>
    <ligand>
        <name>ATP</name>
        <dbReference type="ChEBI" id="CHEBI:30616"/>
    </ligand>
</feature>
<feature type="binding site" evidence="5">
    <location>
        <position position="626"/>
    </location>
    <ligand>
        <name>ATP</name>
        <dbReference type="ChEBI" id="CHEBI:30616"/>
    </ligand>
</feature>
<feature type="binding site" evidence="5">
    <location>
        <position position="677"/>
    </location>
    <ligand>
        <name>ATP</name>
        <dbReference type="ChEBI" id="CHEBI:30616"/>
    </ligand>
</feature>
<feature type="binding site" evidence="3">
    <location>
        <position position="683"/>
    </location>
    <ligand>
        <name>ATP</name>
        <dbReference type="ChEBI" id="CHEBI:30616"/>
    </ligand>
</feature>
<feature type="binding site" evidence="5">
    <location>
        <position position="702"/>
    </location>
    <ligand>
        <name>Mg(2+)</name>
        <dbReference type="ChEBI" id="CHEBI:18420"/>
    </ligand>
</feature>
<feature type="binding site" evidence="5">
    <location>
        <position position="705"/>
    </location>
    <ligand>
        <name>ATP</name>
        <dbReference type="ChEBI" id="CHEBI:30616"/>
    </ligand>
</feature>
<feature type="binding site" evidence="5">
    <location>
        <position position="767"/>
    </location>
    <ligand>
        <name>Ca(2+)</name>
        <dbReference type="ChEBI" id="CHEBI:29108"/>
        <label>2</label>
    </ligand>
</feature>
<feature type="binding site" evidence="5">
    <location>
        <position position="770"/>
    </location>
    <ligand>
        <name>Ca(2+)</name>
        <dbReference type="ChEBI" id="CHEBI:29108"/>
        <label>2</label>
    </ligand>
</feature>
<feature type="binding site" evidence="5">
    <location>
        <position position="795"/>
    </location>
    <ligand>
        <name>Ca(2+)</name>
        <dbReference type="ChEBI" id="CHEBI:29108"/>
        <label>1</label>
    </ligand>
</feature>
<feature type="binding site" evidence="5">
    <location>
        <position position="798"/>
    </location>
    <ligand>
        <name>Ca(2+)</name>
        <dbReference type="ChEBI" id="CHEBI:29108"/>
        <label>2</label>
    </ligand>
</feature>
<feature type="binding site" evidence="5">
    <location>
        <position position="799"/>
    </location>
    <ligand>
        <name>Ca(2+)</name>
        <dbReference type="ChEBI" id="CHEBI:29108"/>
        <label>1</label>
    </ligand>
</feature>
<feature type="binding site" evidence="5">
    <location>
        <position position="799"/>
    </location>
    <ligand>
        <name>Ca(2+)</name>
        <dbReference type="ChEBI" id="CHEBI:29108"/>
        <label>2</label>
    </ligand>
</feature>
<feature type="binding site" evidence="3">
    <location>
        <position position="907"/>
    </location>
    <ligand>
        <name>Ca(2+)</name>
        <dbReference type="ChEBI" id="CHEBI:29108"/>
        <label>2</label>
    </ligand>
</feature>
<feature type="modified residue" description="Phosphoserine" evidence="27">
    <location>
        <position position="38"/>
    </location>
</feature>
<feature type="modified residue" description="3'-nitrotyrosine" evidence="6">
    <location>
        <position position="294"/>
    </location>
</feature>
<feature type="modified residue" description="3'-nitrotyrosine" evidence="6">
    <location>
        <position position="295"/>
    </location>
</feature>
<feature type="modified residue" description="Phosphothreonine" evidence="7">
    <location>
        <position position="441"/>
    </location>
</feature>
<feature type="modified residue" description="Phosphoserine" evidence="27">
    <location>
        <position position="531"/>
    </location>
</feature>
<feature type="modified residue" description="Phosphoserine" evidence="6">
    <location>
        <position position="580"/>
    </location>
</feature>
<feature type="modified residue" description="Phosphoserine" evidence="4">
    <location>
        <position position="661"/>
    </location>
</feature>
<feature type="modified residue" description="Phosphoserine" evidence="25 26 27">
    <location>
        <position position="663"/>
    </location>
</feature>
<feature type="disulfide bond" evidence="5">
    <location>
        <begin position="875"/>
        <end position="887"/>
    </location>
</feature>
<feature type="splice variant" id="VSP_000359" description="In isoform 2." evidence="22">
    <original>GKECVQPATKSSCSLSACTDGISWPFVLLIMPLVVWVYSTDTNFSDMFWS</original>
    <variation>AILE</variation>
    <location>
        <begin position="995"/>
        <end position="1044"/>
    </location>
</feature>
<sequence length="1044" mass="114858">MENAHTKTVEEVLGHFGVNESTGLSLEQVKKLKERWGSNELPAEEGKTLLELVIEQFEDLLVRILLLAACISFVLAWFEEGEETITAFVEPFVILLILVANAIVGVWQERNAENAIEALKEYEPEMGKVYRQDRKSVQRIKAKDIVPGDIVEIAVGDKVPADIRLTSIKSTTLRVDQSILTGESVSVIKHTDPVPDPRAVNQDKKNMLFSGTNIAAGKAMGVVVATGVNTEIGKIRDEMVATEQERTPLQQKLDEFGEQLSKVISLICIAVWIINIGHFNDPVHGGSWIRGAIYYFKIAVALAVAAIPEGLPAVITTCLALGTRRMAKKNAIVRSLPSVETLGCTSVICSDKTGTLTTNQMSVCRMFILDKVEGDTCSLNEFSITGSTYAPIGEVQKDDKPVKCHQYDGLVELATICALCNDSALDYNEAKGVYEKVGEATETALTCLVEKMNVFDTELKGLSKIERANACNSVIKQLMKKEFTLEFSRDRKSMSVYCTPNKPSRTSMSKMFVKGAPEGVIDRCTHIRVGSTKVPMTPGVKQKIMSVIREWGSGSDTLRCLALATHDNPLKREEMHLEDSANFIKYETNLTFVGCVGMLDPPRIEVASSVKLCRQAGIRVIMITGDNKGTAVAICRRIGIFGQDEDVTSKAFTGREFDELSPSAQRDACLNARCFARVEPSHKSKIVEFLQSFDEITAMTGDGVNDAPALKKSEIGIAMGSGTAVAKTASEMVLADDNFSTIVAAVEEGRAIYNNMKQFIRYLISSNVGEVVCIFLTAALGFPEALIPVQLLWVNLVTDGLPATALGFNPPDLDIMNKPPRNPKEPLISGWLFFRYLAIGCYVGAATVGAAAWWFIAADGGPRVSFYQLSHFLQCKEDNPDFDGVDCAIFESPYPMTMALSVLVTIEMCNALNSLSENQSLLRMPPWENIWLVGSICLSMSLHFLILYVEPLPLIFQITPLNLTQWLMVLKISLPVILMDETLKFVARNYLEQPGKECVQPATKSSCSLSACTDGISWPFVLLIMPLVVWVYSTDTNFSDMFWS</sequence>
<organism>
    <name type="scientific">Mus musculus</name>
    <name type="common">Mouse</name>
    <dbReference type="NCBI Taxonomy" id="10090"/>
    <lineage>
        <taxon>Eukaryota</taxon>
        <taxon>Metazoa</taxon>
        <taxon>Chordata</taxon>
        <taxon>Craniata</taxon>
        <taxon>Vertebrata</taxon>
        <taxon>Euteleostomi</taxon>
        <taxon>Mammalia</taxon>
        <taxon>Eutheria</taxon>
        <taxon>Euarchontoglires</taxon>
        <taxon>Glires</taxon>
        <taxon>Rodentia</taxon>
        <taxon>Myomorpha</taxon>
        <taxon>Muroidea</taxon>
        <taxon>Muridae</taxon>
        <taxon>Murinae</taxon>
        <taxon>Mus</taxon>
        <taxon>Mus</taxon>
    </lineage>
</organism>
<reference key="1">
    <citation type="journal article" date="2000" name="Mamm. Genome">
        <title>Structure and organization of the mouse Atp2a2 gene encoding the sarco(endo)plasmic reticulum Ca(2+)-ATPase 2 (SERCA2) isoforms.</title>
        <authorList>
            <person name="Ver Heyen M."/>
            <person name="Reed T.D."/>
            <person name="Blough R.E."/>
            <person name="Zilberman A.L."/>
            <person name="Loukianov E."/>
            <person name="Van Baelen K."/>
            <person name="Raeymaekers L."/>
            <person name="Periasamy M."/>
            <person name="Wutack F."/>
        </authorList>
    </citation>
    <scope>NUCLEOTIDE SEQUENCE [GENOMIC DNA / MRNA] (ISOFORMS 1 AND 2)</scope>
    <source>
        <strain>129/SvJ</strain>
        <strain>NIH Swiss</strain>
        <tissue>Embryo</tissue>
    </source>
</reference>
<reference key="2">
    <citation type="journal article" date="2004" name="Genome Res.">
        <title>The status, quality, and expansion of the NIH full-length cDNA project: the Mammalian Gene Collection (MGC).</title>
        <authorList>
            <consortium name="The MGC Project Team"/>
        </authorList>
    </citation>
    <scope>NUCLEOTIDE SEQUENCE [LARGE SCALE MRNA] (ISOFORM 1)</scope>
    <source>
        <strain>C57BL/6J</strain>
        <tissue>Brain</tissue>
    </source>
</reference>
<reference key="3">
    <citation type="submission" date="2009-01" db="UniProtKB">
        <authorList>
            <person name="Lubec G."/>
            <person name="Kang S.U."/>
            <person name="Sunyer B."/>
            <person name="Chen W.-Q."/>
        </authorList>
    </citation>
    <scope>PROTEIN SEQUENCE OF 604-611 AND 638-655</scope>
    <scope>IDENTIFICATION BY MASS SPECTROMETRY</scope>
    <source>
        <strain>C57BL/6J</strain>
        <strain>OF1</strain>
        <tissue>Brain</tissue>
        <tissue>Hippocampus</tissue>
    </source>
</reference>
<reference key="4">
    <citation type="journal article" date="2004" name="Mol. Cell. Biol.">
        <title>TRAM2 protein interacts with endoplasmic reticulum Ca2+ pump Serca2b and is necessary for collagen type I synthesis.</title>
        <authorList>
            <person name="Stefanovic B."/>
            <person name="Stefanovic L."/>
            <person name="Schnabl B."/>
            <person name="Bataller R."/>
            <person name="Brenner D.A."/>
        </authorList>
    </citation>
    <scope>INTERACTION WITH TRAM2</scope>
</reference>
<reference key="5">
    <citation type="journal article" date="2007" name="Proc. Natl. Acad. Sci. U.S.A.">
        <title>Large-scale phosphorylation analysis of mouse liver.</title>
        <authorList>
            <person name="Villen J."/>
            <person name="Beausoleil S.A."/>
            <person name="Gerber S.A."/>
            <person name="Gygi S.P."/>
        </authorList>
    </citation>
    <scope>PHOSPHORYLATION [LARGE SCALE ANALYSIS] AT SER-663</scope>
    <scope>IDENTIFICATION BY MASS SPECTROMETRY [LARGE SCALE ANALYSIS]</scope>
    <source>
        <tissue>Liver</tissue>
    </source>
</reference>
<reference key="6">
    <citation type="journal article" date="2008" name="Circ. Res.">
        <title>S100A8 and S100A9 mediate endotoxin-induced cardiomyocyte dysfunction via the receptor for advanced glycation end products.</title>
        <authorList>
            <person name="Boyd J.H."/>
            <person name="Kan B."/>
            <person name="Roberts H."/>
            <person name="Wang Y."/>
            <person name="Walley K.R."/>
        </authorList>
    </citation>
    <scope>INTERACTION WITH S100A8 AND S100A9</scope>
</reference>
<reference key="7">
    <citation type="journal article" date="2009" name="Immunity">
        <title>The phagosomal proteome in interferon-gamma-activated macrophages.</title>
        <authorList>
            <person name="Trost M."/>
            <person name="English L."/>
            <person name="Lemieux S."/>
            <person name="Courcelles M."/>
            <person name="Desjardins M."/>
            <person name="Thibault P."/>
        </authorList>
    </citation>
    <scope>PHOSPHORYLATION [LARGE SCALE ANALYSIS] AT SER-663</scope>
    <scope>IDENTIFICATION BY MASS SPECTROMETRY [LARGE SCALE ANALYSIS]</scope>
</reference>
<reference key="8">
    <citation type="journal article" date="2010" name="Cell">
        <title>A tissue-specific atlas of mouse protein phosphorylation and expression.</title>
        <authorList>
            <person name="Huttlin E.L."/>
            <person name="Jedrychowski M.P."/>
            <person name="Elias J.E."/>
            <person name="Goswami T."/>
            <person name="Rad R."/>
            <person name="Beausoleil S.A."/>
            <person name="Villen J."/>
            <person name="Haas W."/>
            <person name="Sowa M.E."/>
            <person name="Gygi S.P."/>
        </authorList>
    </citation>
    <scope>PHOSPHORYLATION [LARGE SCALE ANALYSIS] AT SER-38; SER-531 AND SER-663</scope>
    <scope>IDENTIFICATION BY MASS SPECTROMETRY [LARGE SCALE ANALYSIS]</scope>
    <source>
        <tissue>Brain</tissue>
        <tissue>Brown adipose tissue</tissue>
        <tissue>Heart</tissue>
        <tissue>Kidney</tissue>
        <tissue>Liver</tissue>
        <tissue>Lung</tissue>
        <tissue>Pancreas</tissue>
        <tissue>Spleen</tissue>
        <tissue>Testis</tissue>
    </source>
</reference>
<reference key="9">
    <citation type="journal article" date="2012" name="Proc. Natl. Acad. Sci. U.S.A.">
        <title>Extreme sarcoplasmic reticulum volume loss and compensatory T-tubule remodeling after Serca2 knockout.</title>
        <authorList>
            <person name="Swift F."/>
            <person name="Franzini-Armstrong C."/>
            <person name="Oeyehaug L."/>
            <person name="Enger U.H."/>
            <person name="Andersson K.B."/>
            <person name="Christensen G."/>
            <person name="Sejersted O.M."/>
            <person name="Louch W.E."/>
        </authorList>
    </citation>
    <scope>FUNCTION</scope>
    <scope>SUBCELLULAR LOCATION</scope>
    <scope>DISRUPTION PHENOTYPE</scope>
</reference>
<reference key="10">
    <citation type="journal article" date="2012" name="J. Muscle Res. Cell Motil.">
        <title>Tuning the structural coupling between the transmembrane and cytoplasmic domains of phospholamban to control sarcoplasmic reticulum Ca(2+)-ATPase (SERCA) function.</title>
        <authorList>
            <person name="Ha K.N."/>
            <person name="Gustavsson M."/>
            <person name="Veglia G."/>
        </authorList>
    </citation>
    <scope>FUNCTION</scope>
    <scope>INTERACTION WITH PLN</scope>
    <scope>ACTIVITY REGULATION</scope>
</reference>
<reference key="11">
    <citation type="journal article" date="2013" name="Cell Metab.">
        <title>Tmem64 modulates calcium signaling during RANKL-mediated osteoclast differentiation.</title>
        <authorList>
            <person name="Kim H."/>
            <person name="Kim T."/>
            <person name="Jeong B.C."/>
            <person name="Cho I.T."/>
            <person name="Han D."/>
            <person name="Takegahara N."/>
            <person name="Negishi-Koga T."/>
            <person name="Takayanagi H."/>
            <person name="Lee J.H."/>
            <person name="Sul J.Y."/>
            <person name="Prasad V."/>
            <person name="Lee S.H."/>
            <person name="Choi Y."/>
        </authorList>
    </citation>
    <scope>FUNCTION</scope>
    <scope>INTERACTION WITH TMEM64 AND PDIA3</scope>
    <scope>SUBCELLULAR LOCATION</scope>
    <scope>INDUCTION</scope>
</reference>
<reference key="12">
    <citation type="journal article" date="2016" name="Sci. Signal.">
        <title>Widespread control of calcium signaling by a family of SERCA-inhibiting micropeptides.</title>
        <authorList>
            <person name="Anderson D.M."/>
            <person name="Makarewich C.A."/>
            <person name="Anderson K.M."/>
            <person name="Shelton J.M."/>
            <person name="Bezprozvannaya S."/>
            <person name="Bassel-Duby R."/>
            <person name="Olson E.N."/>
        </authorList>
    </citation>
    <scope>FUNCTION</scope>
    <scope>INTERACTION WITH ARLN; MRLN; PLN; ERLN AND SLN</scope>
</reference>
<reference key="13">
    <citation type="journal article" date="2017" name="Mol. Cell">
        <title>The ER-Localized Transmembrane Protein EPG-3/VMP1 Regulates SERCA Activity to Control ER-Isolation Membrane Contacts for Autophagosome Formation.</title>
        <authorList>
            <person name="Zhao Y.G."/>
            <person name="Chen Y."/>
            <person name="Miao G."/>
            <person name="Zhao H."/>
            <person name="Qu W."/>
            <person name="Li D."/>
            <person name="Wang Z."/>
            <person name="Liu N."/>
            <person name="Li L."/>
            <person name="Chen S."/>
            <person name="Liu P."/>
            <person name="Feng D."/>
            <person name="Zhang H."/>
        </authorList>
    </citation>
    <scope>CATALYTIC ACTIVITY</scope>
</reference>
<reference key="14">
    <citation type="journal article" date="2019" name="Front. Pharmacol.">
        <title>Role of TG2-mediated SERCA2 serotonylation on hypoxic pulmonary vein remodeling.</title>
        <authorList>
            <person name="Liu B."/>
            <person name="Wang D."/>
            <person name="Luo E."/>
            <person name="Hou J."/>
            <person name="Qiao Y."/>
            <person name="Yan G."/>
            <person name="Wang Q."/>
            <person name="Tang C."/>
        </authorList>
    </citation>
    <scope>SEROTONYLATION</scope>
</reference>
<reference key="15">
    <citation type="journal article" date="2019" name="J. Mol. Biol.">
        <title>Newly Discovered Micropeptide Regulators of SERCA Form Oligomers but Bind to the Pump as Monomers.</title>
        <authorList>
            <person name="Singh D.R."/>
            <person name="Dalton M.P."/>
            <person name="Cho E.E."/>
            <person name="Pribadi M.P."/>
            <person name="Zak T.J."/>
            <person name="Seflova J."/>
            <person name="Makarewich C.A."/>
            <person name="Olson E.N."/>
            <person name="Robia S.L."/>
        </authorList>
    </citation>
    <scope>INTERACTION WITH ARLN; MRLN; PLN; SLN; ERLN AND STRIT1</scope>
</reference>
<reference key="16">
    <citation type="journal article" date="2020" name="Nat. Commun.">
        <title>MFSD7C switches mitochondrial ATP synthesis to thermogenesis in response to heme.</title>
        <authorList>
            <person name="Li Y."/>
            <person name="Ivica N.A."/>
            <person name="Dong T."/>
            <person name="Papageorgiou D.P."/>
            <person name="He Y."/>
            <person name="Brown D.R."/>
            <person name="Kleyman M."/>
            <person name="Hu G."/>
            <person name="Chen W.W."/>
            <person name="Sullivan L.B."/>
            <person name="Del Rosario A."/>
            <person name="Hammond P.T."/>
            <person name="Vander Heiden M.G."/>
            <person name="Chen J."/>
        </authorList>
    </citation>
    <scope>FUNCTION</scope>
    <scope>INTERACTION WITH FLVCR2</scope>
    <scope>SUBCELLULAR LOCATION</scope>
</reference>
<reference key="17">
    <citation type="journal article" date="2021" name="Front. Cell Dev. Biol.">
        <title>TUNAR lncRNA Encodes a Microprotein that Regulates Neural Differentiation and Neurite Formation by Modulating Calcium Dynamics.</title>
        <authorList>
            <person name="Senis E."/>
            <person name="Esgleas M."/>
            <person name="Najas S."/>
            <person name="Jimenez-Sabado V."/>
            <person name="Bertani C."/>
            <person name="Gimenez-Alejandre M."/>
            <person name="Escriche A."/>
            <person name="Ruiz-Orera J."/>
            <person name="Hergueta-Redondo M."/>
            <person name="Jimenez M."/>
            <person name="Giralt A."/>
            <person name="Nuciforo P."/>
            <person name="Alba M.M."/>
            <person name="Peinado H."/>
            <person name="Del Toro D."/>
            <person name="Hove-Madsen L."/>
            <person name="Goetz M."/>
            <person name="Abad M."/>
        </authorList>
    </citation>
    <scope>INTERACTION WITH TUNAR</scope>
</reference>
<reference key="18">
    <citation type="journal article" date="2022" name="J. Exp. Med.">
        <title>FNIP1 regulates adipocyte browning and systemic glucose homeostasis in mice by shaping intracellular calcium dynamics.</title>
        <authorList>
            <person name="Yin Y."/>
            <person name="Xu D."/>
            <person name="Mao Y."/>
            <person name="Xiao L."/>
            <person name="Sun Z."/>
            <person name="Liu J."/>
            <person name="Zhou D."/>
            <person name="Xu Z."/>
            <person name="Liu L."/>
            <person name="Fu T."/>
            <person name="Ding C."/>
            <person name="Guo Q."/>
            <person name="Sun W."/>
            <person name="Zhou Z."/>
            <person name="Yang L."/>
            <person name="Jia Y."/>
            <person name="Chen X."/>
            <person name="Gan Z."/>
        </authorList>
    </citation>
    <scope>INTERACTION WITH FNIP1</scope>
</reference>
<gene>
    <name evidence="24" type="primary">Atp2a2</name>
</gene>
<evidence type="ECO:0000250" key="1"/>
<evidence type="ECO:0000250" key="2">
    <source>
        <dbReference type="UniProtKB" id="O46674"/>
    </source>
</evidence>
<evidence type="ECO:0000250" key="3">
    <source>
        <dbReference type="UniProtKB" id="P04191"/>
    </source>
</evidence>
<evidence type="ECO:0000250" key="4">
    <source>
        <dbReference type="UniProtKB" id="P11507"/>
    </source>
</evidence>
<evidence type="ECO:0000250" key="5">
    <source>
        <dbReference type="UniProtKB" id="P11607"/>
    </source>
</evidence>
<evidence type="ECO:0000250" key="6">
    <source>
        <dbReference type="UniProtKB" id="P16615"/>
    </source>
</evidence>
<evidence type="ECO:0000250" key="7">
    <source>
        <dbReference type="UniProtKB" id="Q64578"/>
    </source>
</evidence>
<evidence type="ECO:0000250" key="8">
    <source>
        <dbReference type="UniProtKB" id="Q8R429"/>
    </source>
</evidence>
<evidence type="ECO:0000255" key="9"/>
<evidence type="ECO:0000269" key="10">
    <source>
    </source>
</evidence>
<evidence type="ECO:0000269" key="11">
    <source>
    </source>
</evidence>
<evidence type="ECO:0000269" key="12">
    <source>
    </source>
</evidence>
<evidence type="ECO:0000269" key="13">
    <source>
    </source>
</evidence>
<evidence type="ECO:0000269" key="14">
    <source>
    </source>
</evidence>
<evidence type="ECO:0000269" key="15">
    <source>
    </source>
</evidence>
<evidence type="ECO:0000269" key="16">
    <source>
    </source>
</evidence>
<evidence type="ECO:0000269" key="17">
    <source>
    </source>
</evidence>
<evidence type="ECO:0000269" key="18">
    <source>
    </source>
</evidence>
<evidence type="ECO:0000269" key="19">
    <source>
    </source>
</evidence>
<evidence type="ECO:0000269" key="20">
    <source>
    </source>
</evidence>
<evidence type="ECO:0000269" key="21">
    <source>
    </source>
</evidence>
<evidence type="ECO:0000303" key="22">
    <source>
    </source>
</evidence>
<evidence type="ECO:0000305" key="23"/>
<evidence type="ECO:0000312" key="24">
    <source>
        <dbReference type="MGI" id="MGI:88110"/>
    </source>
</evidence>
<evidence type="ECO:0007744" key="25">
    <source>
    </source>
</evidence>
<evidence type="ECO:0007744" key="26">
    <source>
    </source>
</evidence>
<evidence type="ECO:0007744" key="27">
    <source>
    </source>
</evidence>
<name>AT2A2_MOUSE</name>
<proteinExistence type="evidence at protein level"/>
<comment type="function">
    <text evidence="6 12 13 15 19">This magnesium-dependent enzyme catalyzes the hydrolysis of ATP coupled with the translocation of calcium from the cytosol to the sarcoplasmic reticulum lumen. Involved in autophagy in response to starvation. Upon interaction with VMP1 and activation, controls ER-isolation membrane contacts for autophagosome formation. Also modulates ER contacts with lipid droplets, mitochondria and endosomes (By similarity). In coordination with FLVCR2 mediates heme-stimulated switching from mitochondrial ATP synthesis to thermogenesis.</text>
</comment>
<comment type="function">
    <molecule>Isoform 2</molecule>
    <text evidence="14">Involved in the regulation of the contraction/relaxation cycle (PubMed:23395171). Acts as a regulator of TNFSF11-mediated Ca(2+) signaling pathways via its interaction with TMEM64 which is critical for the TNFSF11-induced CREB1 activation and mitochondrial ROS generation necessary for proper osteoclast generation (PubMed:23395171). Association between TMEM64 and SERCA2 in the ER leads to cytosolic Ca(2+) spiking for activation of NFATC1 and production of mitochondrial ROS, thereby triggering Ca(2+) signaling cascades that promote osteoclast differentiation and activation (PubMed:23395171).</text>
</comment>
<comment type="catalytic activity">
    <reaction evidence="16">
        <text>Ca(2+)(in) + ATP + H2O = Ca(2+)(out) + ADP + phosphate + H(+)</text>
        <dbReference type="Rhea" id="RHEA:18105"/>
        <dbReference type="ChEBI" id="CHEBI:15377"/>
        <dbReference type="ChEBI" id="CHEBI:15378"/>
        <dbReference type="ChEBI" id="CHEBI:29108"/>
        <dbReference type="ChEBI" id="CHEBI:30616"/>
        <dbReference type="ChEBI" id="CHEBI:43474"/>
        <dbReference type="ChEBI" id="CHEBI:456216"/>
        <dbReference type="EC" id="7.2.2.10"/>
    </reaction>
    <physiologicalReaction direction="left-to-right" evidence="16">
        <dbReference type="Rhea" id="RHEA:18106"/>
    </physiologicalReaction>
</comment>
<comment type="cofactor">
    <cofactor evidence="5">
        <name>Mg(2+)</name>
        <dbReference type="ChEBI" id="CHEBI:18420"/>
    </cofactor>
</comment>
<comment type="activity regulation">
    <text evidence="2 3 6 8 13">Has different conformational states with differential Ca2+ affinity. The E1 conformational state (active form) shows high Ca(2+) affinity, while the E2 state exhibits low Ca(2+) affinity. Binding of ATP allosterically increases its affinity for subsequent binding of Ca2+ (By similarity). Reversibly inhibited by phospholamban (PLN) at low calcium concentrations (PubMed:22971924). PLN inhibits ATP2A2 Ca(2+) affinity by disrupting its allosteric activation by ATP (By similarity). Inhibited by sarcolipin (SLN) and myoregulin (MRLN). The inhibition is blocked by VMP1 (By similarity). Enhanced by STRIT1/DWORF; STRIT1 increases activity by displacing sarcolipin (SLN), phospholamban (PLN) and myoregulin (MRLN) (By similarity). Stabilizes SERCA2 in its E2 state (By similarity).</text>
</comment>
<comment type="subunit">
    <text evidence="3 6 8 11 13 14 15 17 19 20 21">Interacts with sarcolipin (SLN); the interaction inhibits ATP2A2 Ca(2+) affinity (PubMed:27923914, PubMed:31449798). Interacts with phospholamban (PLN); the interaction inhibits ATP2A2 Ca(2+) affinity (PubMed:22971924, PubMed:31449798). Interacts with myoregulin (MRLN) (PubMed:27923914, PubMed:31449798). Interacts with ARLN and ERLN; the interactions inhibit ATP2A2 Ca(2+) affinity (PubMed:27923914, PubMed:31449798). Interacts with STRIT1/DWORF; the interaction results in activation of ATP2A2 (PubMed:31449798). Interacts with the monomeric forms of SLN, PLN, ARLN, ERLN and STRI1/DWORF (PubMed:31449798). Interacts with HAX1. Interacts with S100A8 and S100A9 (PubMed:18403730). Interacts with SLC35G1 and STIM1. Interacts with TMEM203 (By similarity). Interacts with TMEM64 and PDIA3 (PubMed:23395171). Interacts with TMX1 (By similarity). Interacts with TMX2. Interacts with VMP1; VMP1 competes with PLN and SLN to prevent them from forming an inhibitory complex with ATP2A2. Interacts with ULK1 (By similarity). Interacts with S100A1 in a Ca(2+)-dependent manner (By similarity). Interacts with TUNAR (PubMed:35036403). Interacts with FLVCR2; this interaction occurs in the absence of heme and promotes ATP2A2 proteasomal degradation; this complex is dissociated upon heme binding (PubMed:32973183). Interacts with FNIP1 (PubMed:35412553).</text>
</comment>
<comment type="subunit">
    <molecule>Isoform 1</molecule>
    <text evidence="10">Interacts with TRAM2 (via C-terminus).</text>
</comment>
<comment type="interaction">
    <interactant intactId="EBI-770763">
        <id>O55143</id>
    </interactant>
    <interactant intactId="EBI-2693710">
        <id>Q5S006</id>
        <label>Lrrk2</label>
    </interactant>
    <organismsDiffer>false</organismsDiffer>
    <experiments>9</experiments>
</comment>
<comment type="interaction">
    <interactant intactId="EBI-770763">
        <id>O55143</id>
    </interactant>
    <interactant intactId="EBI-9837938">
        <id>E2JF22</id>
        <label>Piezo1</label>
    </interactant>
    <organismsDiffer>false</organismsDiffer>
    <experiments>3</experiments>
</comment>
<comment type="interaction">
    <interactant intactId="EBI-770763">
        <id>O55143</id>
    </interactant>
    <interactant intactId="EBI-5323863">
        <id>Q5S007</id>
        <label>LRRK2</label>
    </interactant>
    <organismsDiffer>true</organismsDiffer>
    <experiments>13</experiments>
</comment>
<comment type="subcellular location">
    <subcellularLocation>
        <location evidence="14 19">Endoplasmic reticulum membrane</location>
        <topology evidence="9">Multi-pass membrane protein</topology>
    </subcellularLocation>
    <subcellularLocation>
        <location evidence="12">Sarcoplasmic reticulum membrane</location>
        <topology evidence="9">Multi-pass membrane protein</topology>
    </subcellularLocation>
    <text evidence="19">Colocalizes with FLVCR2 at the mitochondrial-ER contact junction.</text>
</comment>
<comment type="alternative products">
    <event type="alternative splicing"/>
    <isoform>
        <id>O55143-1</id>
        <name>1</name>
        <name>Atp2a2b</name>
        <name>SERCA2b</name>
        <sequence type="displayed"/>
    </isoform>
    <isoform>
        <id>O55143-2</id>
        <name>2</name>
        <name>Atp2a2a</name>
        <name>SERCA2a</name>
        <sequence type="described" ref="VSP_000359"/>
    </isoform>
</comment>
<comment type="tissue specificity">
    <text>Isoform 2 is highly expressed in heart and slow twitch skeletal muscle. Isoform 2 is widely expressed.</text>
</comment>
<comment type="induction">
    <text evidence="14">Highly up-regulated during osteoclast differentiation.</text>
</comment>
<comment type="domain">
    <text evidence="3">Ca(2+) and ATP binding cause major rearrangements of the cytoplasmic and transmembrane domains. According to the E1-E2 model, Ca(2+) binding to the cytosolic domain of the pump in the high-affinity E1 conformation is followed by the ATP-dependent phosphorylation of the active site Asp, giving rise to E1P. A conformational change of the phosphoenzyme gives rise to the low-affinity E2P state that exposes the Ca(2+) ions to the lumenal side and promotes Ca(2+) release. Dephosphorylation of the active site Asp mediates the subsequent return to the E1 conformation.</text>
</comment>
<comment type="domain">
    <text evidence="3">PLN and SLN both have a single transmembrane helix; both occupy a similar binding site that is situated between the ATP2A2 transmembrane helices.</text>
</comment>
<comment type="PTM">
    <text evidence="6">Nitrated under oxidative stress. Nitration on the two tyrosine residues inhibits catalytic activity.</text>
</comment>
<comment type="PTM">
    <text evidence="18">Serotonylated on Gln residues by TGM2 in response to hypoxia, leading to its inactivation.</text>
</comment>
<comment type="disruption phenotype">
    <text evidence="12">Sarcoplasmic reticulum collapse and volume reduction. Although dimensions of cardiomyocyte are not affected, total surface area is significantly increased, resulting in increased T-tubule density.</text>
</comment>
<comment type="similarity">
    <text evidence="23">Belongs to the cation transport ATPase (P-type) (TC 3.A.3) family. Type IIA subfamily.</text>
</comment>
<keyword id="KW-0025">Alternative splicing</keyword>
<keyword id="KW-0067">ATP-binding</keyword>
<keyword id="KW-0106">Calcium</keyword>
<keyword id="KW-0109">Calcium transport</keyword>
<keyword id="KW-0903">Direct protein sequencing</keyword>
<keyword id="KW-1015">Disulfide bond</keyword>
<keyword id="KW-0256">Endoplasmic reticulum</keyword>
<keyword id="KW-0406">Ion transport</keyword>
<keyword id="KW-0460">Magnesium</keyword>
<keyword id="KW-0472">Membrane</keyword>
<keyword id="KW-0479">Metal-binding</keyword>
<keyword id="KW-0944">Nitration</keyword>
<keyword id="KW-0547">Nucleotide-binding</keyword>
<keyword id="KW-0597">Phosphoprotein</keyword>
<keyword id="KW-1185">Reference proteome</keyword>
<keyword id="KW-0703">Sarcoplasmic reticulum</keyword>
<keyword id="KW-1278">Translocase</keyword>
<keyword id="KW-0812">Transmembrane</keyword>
<keyword id="KW-1133">Transmembrane helix</keyword>
<keyword id="KW-0813">Transport</keyword>
<protein>
    <recommendedName>
        <fullName evidence="23">Sarcoplasmic/endoplasmic reticulum calcium ATPase 2</fullName>
        <shortName>SERCA2</shortName>
        <shortName>SR Ca(2+)-ATPase 2</shortName>
        <ecNumber evidence="16">7.2.2.10</ecNumber>
    </recommendedName>
    <alternativeName>
        <fullName>Calcium pump 2</fullName>
    </alternativeName>
    <alternativeName>
        <fullName>Calcium-transporting ATPase sarcoplasmic reticulum type, slow twitch skeletal muscle isoform</fullName>
    </alternativeName>
    <alternativeName>
        <fullName>Endoplasmic reticulum class 1/2 Ca(2+) ATPase</fullName>
    </alternativeName>
</protein>
<dbReference type="EC" id="7.2.2.10" evidence="16"/>
<dbReference type="EMBL" id="AJ131821">
    <property type="protein sequence ID" value="CAB72436.1"/>
    <property type="molecule type" value="mRNA"/>
</dbReference>
<dbReference type="EMBL" id="AJ223584">
    <property type="protein sequence ID" value="CAA11450.1"/>
    <property type="molecule type" value="mRNA"/>
</dbReference>
<dbReference type="EMBL" id="AF029982">
    <property type="protein sequence ID" value="AAD01889.1"/>
    <property type="molecule type" value="Genomic_DNA"/>
</dbReference>
<dbReference type="EMBL" id="AJ131870">
    <property type="protein sequence ID" value="CAB41017.1"/>
    <property type="molecule type" value="Genomic_DNA"/>
</dbReference>
<dbReference type="EMBL" id="AJ131870">
    <property type="protein sequence ID" value="CAB41018.1"/>
    <property type="molecule type" value="Genomic_DNA"/>
</dbReference>
<dbReference type="EMBL" id="BC054531">
    <property type="protein sequence ID" value="AAH54531.1"/>
    <property type="molecule type" value="mRNA"/>
</dbReference>
<dbReference type="EMBL" id="BC054748">
    <property type="protein sequence ID" value="AAH54748.1"/>
    <property type="molecule type" value="mRNA"/>
</dbReference>
<dbReference type="CCDS" id="CCDS57378.1">
    <molecule id="O55143-1"/>
</dbReference>
<dbReference type="CCDS" id="CCDS57379.1">
    <molecule id="O55143-2"/>
</dbReference>
<dbReference type="RefSeq" id="NP_001103610.1">
    <molecule id="O55143-1"/>
    <property type="nucleotide sequence ID" value="NM_001110140.3"/>
</dbReference>
<dbReference type="RefSeq" id="NP_033852.1">
    <molecule id="O55143-2"/>
    <property type="nucleotide sequence ID" value="NM_009722.3"/>
</dbReference>
<dbReference type="SMR" id="O55143"/>
<dbReference type="BioGRID" id="198249">
    <property type="interactions" value="65"/>
</dbReference>
<dbReference type="FunCoup" id="O55143">
    <property type="interactions" value="2796"/>
</dbReference>
<dbReference type="IntAct" id="O55143">
    <property type="interactions" value="51"/>
</dbReference>
<dbReference type="MINT" id="O55143"/>
<dbReference type="STRING" id="10090.ENSMUSP00000031423"/>
<dbReference type="BindingDB" id="O55143"/>
<dbReference type="ChEMBL" id="CHEMBL4523144"/>
<dbReference type="GlyGen" id="O55143">
    <property type="glycosylation" value="2 sites, 1 O-linked glycan (2 sites)"/>
</dbReference>
<dbReference type="iPTMnet" id="O55143"/>
<dbReference type="MetOSite" id="O55143"/>
<dbReference type="PhosphoSitePlus" id="O55143"/>
<dbReference type="SwissPalm" id="O55143"/>
<dbReference type="jPOST" id="O55143"/>
<dbReference type="PaxDb" id="10090-ENSMUSP00000031423"/>
<dbReference type="PeptideAtlas" id="O55143"/>
<dbReference type="ProteomicsDB" id="265123">
    <molecule id="O55143-1"/>
</dbReference>
<dbReference type="ProteomicsDB" id="265124">
    <molecule id="O55143-2"/>
</dbReference>
<dbReference type="Pumba" id="O55143"/>
<dbReference type="Antibodypedia" id="18505">
    <property type="antibodies" value="441 antibodies from 39 providers"/>
</dbReference>
<dbReference type="DNASU" id="11938"/>
<dbReference type="Ensembl" id="ENSMUST00000031423.10">
    <molecule id="O55143-1"/>
    <property type="protein sequence ID" value="ENSMUSP00000031423.9"/>
    <property type="gene ID" value="ENSMUSG00000029467.16"/>
</dbReference>
<dbReference type="Ensembl" id="ENSMUST00000177974.8">
    <molecule id="O55143-2"/>
    <property type="protein sequence ID" value="ENSMUSP00000136104.2"/>
    <property type="gene ID" value="ENSMUSG00000029467.16"/>
</dbReference>
<dbReference type="Ensembl" id="ENSMUST00000179939.8">
    <molecule id="O55143-1"/>
    <property type="protein sequence ID" value="ENSMUSP00000135935.3"/>
    <property type="gene ID" value="ENSMUSG00000029467.16"/>
</dbReference>
<dbReference type="GeneID" id="11938"/>
<dbReference type="KEGG" id="mmu:11938"/>
<dbReference type="UCSC" id="uc008zli.2">
    <molecule id="O55143-2"/>
    <property type="organism name" value="mouse"/>
</dbReference>
<dbReference type="AGR" id="MGI:88110"/>
<dbReference type="CTD" id="488"/>
<dbReference type="MGI" id="MGI:88110">
    <property type="gene designation" value="Atp2a2"/>
</dbReference>
<dbReference type="VEuPathDB" id="HostDB:ENSMUSG00000029467"/>
<dbReference type="eggNOG" id="KOG0202">
    <property type="taxonomic scope" value="Eukaryota"/>
</dbReference>
<dbReference type="GeneTree" id="ENSGT00940000159986"/>
<dbReference type="HOGENOM" id="CLU_002360_3_2_1"/>
<dbReference type="InParanoid" id="O55143"/>
<dbReference type="OMA" id="PLWNNMM"/>
<dbReference type="OrthoDB" id="3352408at2759"/>
<dbReference type="PhylomeDB" id="O55143"/>
<dbReference type="TreeFam" id="TF300651"/>
<dbReference type="BRENDA" id="7.2.2.10">
    <property type="organism ID" value="3474"/>
</dbReference>
<dbReference type="Reactome" id="R-MMU-418359">
    <property type="pathway name" value="Reduction of cytosolic Ca++ levels"/>
</dbReference>
<dbReference type="Reactome" id="R-MMU-5578775">
    <property type="pathway name" value="Ion homeostasis"/>
</dbReference>
<dbReference type="Reactome" id="R-MMU-936837">
    <property type="pathway name" value="Ion transport by P-type ATPases"/>
</dbReference>
<dbReference type="BioGRID-ORCS" id="11938">
    <property type="hits" value="26 hits in 77 CRISPR screens"/>
</dbReference>
<dbReference type="CD-CODE" id="CE726F99">
    <property type="entry name" value="Postsynaptic density"/>
</dbReference>
<dbReference type="ChiTaRS" id="Atp2a2">
    <property type="organism name" value="mouse"/>
</dbReference>
<dbReference type="PRO" id="PR:O55143"/>
<dbReference type="Proteomes" id="UP000000589">
    <property type="component" value="Chromosome 5"/>
</dbReference>
<dbReference type="RNAct" id="O55143">
    <property type="molecule type" value="protein"/>
</dbReference>
<dbReference type="Bgee" id="ENSMUSG00000029467">
    <property type="expression patterns" value="Expressed in myocardium of ventricle and 266 other cell types or tissues"/>
</dbReference>
<dbReference type="GO" id="GO:0005783">
    <property type="term" value="C:endoplasmic reticulum"/>
    <property type="evidence" value="ECO:0000314"/>
    <property type="project" value="MGI"/>
</dbReference>
<dbReference type="GO" id="GO:0005789">
    <property type="term" value="C:endoplasmic reticulum membrane"/>
    <property type="evidence" value="ECO:0000314"/>
    <property type="project" value="MGI"/>
</dbReference>
<dbReference type="GO" id="GO:0016020">
    <property type="term" value="C:membrane"/>
    <property type="evidence" value="ECO:0000314"/>
    <property type="project" value="MGI"/>
</dbReference>
<dbReference type="GO" id="GO:0097470">
    <property type="term" value="C:ribbon synapse"/>
    <property type="evidence" value="ECO:0000314"/>
    <property type="project" value="MGI"/>
</dbReference>
<dbReference type="GO" id="GO:0016529">
    <property type="term" value="C:sarcoplasmic reticulum"/>
    <property type="evidence" value="ECO:0000314"/>
    <property type="project" value="MGI"/>
</dbReference>
<dbReference type="GO" id="GO:0033017">
    <property type="term" value="C:sarcoplasmic reticulum membrane"/>
    <property type="evidence" value="ECO:0007669"/>
    <property type="project" value="UniProtKB-SubCell"/>
</dbReference>
<dbReference type="GO" id="GO:0005524">
    <property type="term" value="F:ATP binding"/>
    <property type="evidence" value="ECO:0007669"/>
    <property type="project" value="UniProtKB-KW"/>
</dbReference>
<dbReference type="GO" id="GO:0016887">
    <property type="term" value="F:ATP hydrolysis activity"/>
    <property type="evidence" value="ECO:0007669"/>
    <property type="project" value="InterPro"/>
</dbReference>
<dbReference type="GO" id="GO:0005246">
    <property type="term" value="F:calcium channel regulator activity"/>
    <property type="evidence" value="ECO:0007669"/>
    <property type="project" value="Ensembl"/>
</dbReference>
<dbReference type="GO" id="GO:0005509">
    <property type="term" value="F:calcium ion binding"/>
    <property type="evidence" value="ECO:0000314"/>
    <property type="project" value="MGI"/>
</dbReference>
<dbReference type="GO" id="GO:0019899">
    <property type="term" value="F:enzyme binding"/>
    <property type="evidence" value="ECO:0000353"/>
    <property type="project" value="BHF-UCL"/>
</dbReference>
<dbReference type="GO" id="GO:0106222">
    <property type="term" value="F:lncRNA binding"/>
    <property type="evidence" value="ECO:0000353"/>
    <property type="project" value="MGI"/>
</dbReference>
<dbReference type="GO" id="GO:0005388">
    <property type="term" value="F:P-type calcium transporter activity"/>
    <property type="evidence" value="ECO:0000314"/>
    <property type="project" value="MGI"/>
</dbReference>
<dbReference type="GO" id="GO:0086039">
    <property type="term" value="F:P-type calcium transporter activity involved in regulation of cardiac muscle cell membrane potential"/>
    <property type="evidence" value="ECO:0000250"/>
    <property type="project" value="UniProtKB"/>
</dbReference>
<dbReference type="GO" id="GO:0044548">
    <property type="term" value="F:S100 protein binding"/>
    <property type="evidence" value="ECO:0007669"/>
    <property type="project" value="Ensembl"/>
</dbReference>
<dbReference type="GO" id="GO:0044325">
    <property type="term" value="F:transmembrane transporter binding"/>
    <property type="evidence" value="ECO:0007669"/>
    <property type="project" value="Ensembl"/>
</dbReference>
<dbReference type="GO" id="GO:0000045">
    <property type="term" value="P:autophagosome assembly"/>
    <property type="evidence" value="ECO:0000250"/>
    <property type="project" value="UniProtKB"/>
</dbReference>
<dbReference type="GO" id="GO:0016240">
    <property type="term" value="P:autophagosome membrane docking"/>
    <property type="evidence" value="ECO:0000250"/>
    <property type="project" value="UniProtKB"/>
</dbReference>
<dbReference type="GO" id="GO:1990036">
    <property type="term" value="P:calcium ion import into sarcoplasmic reticulum"/>
    <property type="evidence" value="ECO:0000315"/>
    <property type="project" value="MGI"/>
</dbReference>
<dbReference type="GO" id="GO:0070588">
    <property type="term" value="P:calcium ion transmembrane transport"/>
    <property type="evidence" value="ECO:0000315"/>
    <property type="project" value="MGI"/>
</dbReference>
<dbReference type="GO" id="GO:1903515">
    <property type="term" value="P:calcium ion transport from cytosol to endoplasmic reticulum"/>
    <property type="evidence" value="ECO:0007669"/>
    <property type="project" value="Ensembl"/>
</dbReference>
<dbReference type="GO" id="GO:0014898">
    <property type="term" value="P:cardiac muscle hypertrophy in response to stress"/>
    <property type="evidence" value="ECO:0000314"/>
    <property type="project" value="MGI"/>
</dbReference>
<dbReference type="GO" id="GO:0034599">
    <property type="term" value="P:cellular response to oxidative stress"/>
    <property type="evidence" value="ECO:0000316"/>
    <property type="project" value="MGI"/>
</dbReference>
<dbReference type="GO" id="GO:0006984">
    <property type="term" value="P:ER-nucleus signaling pathway"/>
    <property type="evidence" value="ECO:0000315"/>
    <property type="project" value="MGI"/>
</dbReference>
<dbReference type="GO" id="GO:0006874">
    <property type="term" value="P:intracellular calcium ion homeostasis"/>
    <property type="evidence" value="ECO:0000314"/>
    <property type="project" value="MGI"/>
</dbReference>
<dbReference type="GO" id="GO:1990456">
    <property type="term" value="P:mitochondrion-endoplasmic reticulum membrane tethering"/>
    <property type="evidence" value="ECO:0000250"/>
    <property type="project" value="UniProtKB"/>
</dbReference>
<dbReference type="GO" id="GO:0045822">
    <property type="term" value="P:negative regulation of heart contraction"/>
    <property type="evidence" value="ECO:0000316"/>
    <property type="project" value="MGI"/>
</dbReference>
<dbReference type="GO" id="GO:0070050">
    <property type="term" value="P:neuron cellular homeostasis"/>
    <property type="evidence" value="ECO:0000315"/>
    <property type="project" value="MGI"/>
</dbReference>
<dbReference type="GO" id="GO:0140056">
    <property type="term" value="P:organelle localization by membrane tethering"/>
    <property type="evidence" value="ECO:0000250"/>
    <property type="project" value="UniProtKB"/>
</dbReference>
<dbReference type="GO" id="GO:0010666">
    <property type="term" value="P:positive regulation of cardiac muscle cell apoptotic process"/>
    <property type="evidence" value="ECO:0000314"/>
    <property type="project" value="MGI"/>
</dbReference>
<dbReference type="GO" id="GO:0032470">
    <property type="term" value="P:positive regulation of endoplasmic reticulum calcium ion concentration"/>
    <property type="evidence" value="ECO:0000315"/>
    <property type="project" value="MGI"/>
</dbReference>
<dbReference type="GO" id="GO:1903233">
    <property type="term" value="P:regulation of calcium ion-dependent exocytosis of neurotransmitter"/>
    <property type="evidence" value="ECO:0000315"/>
    <property type="project" value="MGI"/>
</dbReference>
<dbReference type="GO" id="GO:0006937">
    <property type="term" value="P:regulation of muscle contraction"/>
    <property type="evidence" value="ECO:0000304"/>
    <property type="project" value="MGI"/>
</dbReference>
<dbReference type="GO" id="GO:0002026">
    <property type="term" value="P:regulation of the force of heart contraction"/>
    <property type="evidence" value="ECO:0000316"/>
    <property type="project" value="MGI"/>
</dbReference>
<dbReference type="GO" id="GO:0070296">
    <property type="term" value="P:sarcoplasmic reticulum calcium ion transport"/>
    <property type="evidence" value="ECO:0000315"/>
    <property type="project" value="MGI"/>
</dbReference>
<dbReference type="GO" id="GO:0033292">
    <property type="term" value="P:T-tubule organization"/>
    <property type="evidence" value="ECO:0000315"/>
    <property type="project" value="MGI"/>
</dbReference>
<dbReference type="GO" id="GO:0014883">
    <property type="term" value="P:transition between fast and slow fiber"/>
    <property type="evidence" value="ECO:0000314"/>
    <property type="project" value="MGI"/>
</dbReference>
<dbReference type="CDD" id="cd02083">
    <property type="entry name" value="P-type_ATPase_SERCA"/>
    <property type="match status" value="1"/>
</dbReference>
<dbReference type="FunFam" id="2.70.150.10:FF:000143">
    <property type="entry name" value="Calcium-transporting ATPase"/>
    <property type="match status" value="1"/>
</dbReference>
<dbReference type="FunFam" id="3.40.1110.10:FF:000003">
    <property type="entry name" value="Calcium-transporting ATPase"/>
    <property type="match status" value="1"/>
</dbReference>
<dbReference type="FunFam" id="3.40.50.1000:FF:000005">
    <property type="entry name" value="Calcium-transporting ATPase 1"/>
    <property type="match status" value="1"/>
</dbReference>
<dbReference type="FunFam" id="1.20.1110.10:FF:000065">
    <property type="entry name" value="Sarcoplasmic/endoplasmic reticulum calcium ATPase 1"/>
    <property type="match status" value="3"/>
</dbReference>
<dbReference type="Gene3D" id="3.40.1110.10">
    <property type="entry name" value="Calcium-transporting ATPase, cytoplasmic domain N"/>
    <property type="match status" value="1"/>
</dbReference>
<dbReference type="Gene3D" id="2.70.150.10">
    <property type="entry name" value="Calcium-transporting ATPase, cytoplasmic transduction domain A"/>
    <property type="match status" value="1"/>
</dbReference>
<dbReference type="Gene3D" id="1.20.1110.10">
    <property type="entry name" value="Calcium-transporting ATPase, transmembrane domain"/>
    <property type="match status" value="1"/>
</dbReference>
<dbReference type="Gene3D" id="3.40.50.1000">
    <property type="entry name" value="HAD superfamily/HAD-like"/>
    <property type="match status" value="1"/>
</dbReference>
<dbReference type="InterPro" id="IPR006068">
    <property type="entry name" value="ATPase_P-typ_cation-transptr_C"/>
</dbReference>
<dbReference type="InterPro" id="IPR004014">
    <property type="entry name" value="ATPase_P-typ_cation-transptr_N"/>
</dbReference>
<dbReference type="InterPro" id="IPR023299">
    <property type="entry name" value="ATPase_P-typ_cyto_dom_N"/>
</dbReference>
<dbReference type="InterPro" id="IPR018303">
    <property type="entry name" value="ATPase_P-typ_P_site"/>
</dbReference>
<dbReference type="InterPro" id="IPR023298">
    <property type="entry name" value="ATPase_P-typ_TM_dom_sf"/>
</dbReference>
<dbReference type="InterPro" id="IPR008250">
    <property type="entry name" value="ATPase_P-typ_transduc_dom_A_sf"/>
</dbReference>
<dbReference type="InterPro" id="IPR036412">
    <property type="entry name" value="HAD-like_sf"/>
</dbReference>
<dbReference type="InterPro" id="IPR023214">
    <property type="entry name" value="HAD_sf"/>
</dbReference>
<dbReference type="InterPro" id="IPR005782">
    <property type="entry name" value="P-type_ATPase_IIA"/>
</dbReference>
<dbReference type="InterPro" id="IPR001757">
    <property type="entry name" value="P_typ_ATPase"/>
</dbReference>
<dbReference type="InterPro" id="IPR044492">
    <property type="entry name" value="P_typ_ATPase_HD_dom"/>
</dbReference>
<dbReference type="NCBIfam" id="TIGR01116">
    <property type="entry name" value="ATPase-IIA1_Ca"/>
    <property type="match status" value="1"/>
</dbReference>
<dbReference type="NCBIfam" id="TIGR01494">
    <property type="entry name" value="ATPase_P-type"/>
    <property type="match status" value="2"/>
</dbReference>
<dbReference type="PANTHER" id="PTHR42861">
    <property type="entry name" value="CALCIUM-TRANSPORTING ATPASE"/>
    <property type="match status" value="1"/>
</dbReference>
<dbReference type="Pfam" id="PF13246">
    <property type="entry name" value="Cation_ATPase"/>
    <property type="match status" value="1"/>
</dbReference>
<dbReference type="Pfam" id="PF00689">
    <property type="entry name" value="Cation_ATPase_C"/>
    <property type="match status" value="1"/>
</dbReference>
<dbReference type="Pfam" id="PF00690">
    <property type="entry name" value="Cation_ATPase_N"/>
    <property type="match status" value="1"/>
</dbReference>
<dbReference type="Pfam" id="PF00122">
    <property type="entry name" value="E1-E2_ATPase"/>
    <property type="match status" value="1"/>
</dbReference>
<dbReference type="Pfam" id="PF00702">
    <property type="entry name" value="Hydrolase"/>
    <property type="match status" value="1"/>
</dbReference>
<dbReference type="PRINTS" id="PR00119">
    <property type="entry name" value="CATATPASE"/>
</dbReference>
<dbReference type="PRINTS" id="PR00120">
    <property type="entry name" value="HATPASE"/>
</dbReference>
<dbReference type="SFLD" id="SFLDS00003">
    <property type="entry name" value="Haloacid_Dehalogenase"/>
    <property type="match status" value="1"/>
</dbReference>
<dbReference type="SFLD" id="SFLDF00027">
    <property type="entry name" value="p-type_atpase"/>
    <property type="match status" value="1"/>
</dbReference>
<dbReference type="SMART" id="SM00831">
    <property type="entry name" value="Cation_ATPase_N"/>
    <property type="match status" value="1"/>
</dbReference>
<dbReference type="SUPFAM" id="SSF81653">
    <property type="entry name" value="Calcium ATPase, transduction domain A"/>
    <property type="match status" value="1"/>
</dbReference>
<dbReference type="SUPFAM" id="SSF81665">
    <property type="entry name" value="Calcium ATPase, transmembrane domain M"/>
    <property type="match status" value="1"/>
</dbReference>
<dbReference type="SUPFAM" id="SSF56784">
    <property type="entry name" value="HAD-like"/>
    <property type="match status" value="1"/>
</dbReference>
<dbReference type="SUPFAM" id="SSF81660">
    <property type="entry name" value="Metal cation-transporting ATPase, ATP-binding domain N"/>
    <property type="match status" value="1"/>
</dbReference>
<dbReference type="PROSITE" id="PS00154">
    <property type="entry name" value="ATPASE_E1_E2"/>
    <property type="match status" value="1"/>
</dbReference>
<accession>O55143</accession>
<accession>Q9R2A9</accession>
<accession>Q9WUT5</accession>